<gene>
    <name evidence="14" type="primary">Srpk1</name>
</gene>
<name>SRPK1_MOUSE</name>
<feature type="chain" id="PRO_0000086675" description="SRSF protein kinase 1">
    <location>
        <begin position="1"/>
        <end position="648"/>
    </location>
</feature>
<feature type="domain" description="Protein kinase" evidence="4">
    <location>
        <begin position="80"/>
        <end position="646"/>
    </location>
</feature>
<feature type="region of interest" description="Disordered" evidence="6">
    <location>
        <begin position="1"/>
        <end position="57"/>
    </location>
</feature>
<feature type="region of interest" description="Disordered" evidence="6">
    <location>
        <begin position="238"/>
        <end position="354"/>
    </location>
</feature>
<feature type="region of interest" description="Disordered" evidence="6">
    <location>
        <begin position="395"/>
        <end position="464"/>
    </location>
</feature>
<feature type="compositionally biased region" description="Basic residues" evidence="6">
    <location>
        <begin position="10"/>
        <end position="22"/>
    </location>
</feature>
<feature type="compositionally biased region" description="Acidic residues" evidence="6">
    <location>
        <begin position="40"/>
        <end position="57"/>
    </location>
</feature>
<feature type="compositionally biased region" description="Basic residues" evidence="6">
    <location>
        <begin position="265"/>
        <end position="276"/>
    </location>
</feature>
<feature type="compositionally biased region" description="Basic and acidic residues" evidence="6">
    <location>
        <begin position="277"/>
        <end position="288"/>
    </location>
</feature>
<feature type="compositionally biased region" description="Basic and acidic residues" evidence="6">
    <location>
        <begin position="304"/>
        <end position="317"/>
    </location>
</feature>
<feature type="compositionally biased region" description="Polar residues" evidence="6">
    <location>
        <begin position="333"/>
        <end position="343"/>
    </location>
</feature>
<feature type="compositionally biased region" description="Polar residues" evidence="6">
    <location>
        <begin position="396"/>
        <end position="441"/>
    </location>
</feature>
<feature type="active site" description="Proton acceptor" evidence="3 4 5">
    <location>
        <position position="213"/>
    </location>
</feature>
<feature type="binding site" evidence="3 4">
    <location>
        <begin position="86"/>
        <end position="94"/>
    </location>
    <ligand>
        <name>ATP</name>
        <dbReference type="ChEBI" id="CHEBI:30616"/>
    </ligand>
</feature>
<feature type="binding site" evidence="3 4">
    <location>
        <position position="109"/>
    </location>
    <ligand>
        <name>ATP</name>
        <dbReference type="ChEBI" id="CHEBI:30616"/>
    </ligand>
</feature>
<feature type="modified residue" description="Phosphoserine" evidence="15 16">
    <location>
        <position position="51"/>
    </location>
</feature>
<feature type="modified residue" description="Phosphoserine" evidence="15">
    <location>
        <position position="309"/>
    </location>
</feature>
<feature type="modified residue" description="Phosphoserine" evidence="15 16">
    <location>
        <position position="311"/>
    </location>
</feature>
<feature type="modified residue" description="Phosphoserine" evidence="2">
    <location>
        <position position="333"/>
    </location>
</feature>
<feature type="modified residue" description="Phosphothreonine" evidence="15 16">
    <location>
        <position position="448"/>
    </location>
</feature>
<feature type="modified residue" description="Phosphoserine" evidence="15 16">
    <location>
        <position position="450"/>
    </location>
</feature>
<feature type="modified residue" description="Phosphoserine; by CK2" evidence="2">
    <location>
        <position position="548"/>
    </location>
</feature>
<feature type="sequence conflict" description="In Ref. 2; CAA11833." evidence="9" ref="2">
    <original>S</original>
    <variation>I</variation>
    <location>
        <position position="113"/>
    </location>
</feature>
<feature type="sequence conflict" description="In Ref. 2; CAA11833." evidence="9" ref="2">
    <original>G</original>
    <variation>V</variation>
    <location>
        <position position="155"/>
    </location>
</feature>
<feature type="sequence conflict" description="In Ref. 2; CAA11833." evidence="9" ref="2">
    <original>Q</original>
    <variation>T</variation>
    <location>
        <position position="256"/>
    </location>
</feature>
<feature type="sequence conflict" description="In Ref. 1; BAA25299." evidence="9" ref="1">
    <original>A</original>
    <variation>P</variation>
    <location>
        <position position="279"/>
    </location>
</feature>
<organism>
    <name type="scientific">Mus musculus</name>
    <name type="common">Mouse</name>
    <dbReference type="NCBI Taxonomy" id="10090"/>
    <lineage>
        <taxon>Eukaryota</taxon>
        <taxon>Metazoa</taxon>
        <taxon>Chordata</taxon>
        <taxon>Craniata</taxon>
        <taxon>Vertebrata</taxon>
        <taxon>Euteleostomi</taxon>
        <taxon>Mammalia</taxon>
        <taxon>Eutheria</taxon>
        <taxon>Euarchontoglires</taxon>
        <taxon>Glires</taxon>
        <taxon>Rodentia</taxon>
        <taxon>Myomorpha</taxon>
        <taxon>Muroidea</taxon>
        <taxon>Muridae</taxon>
        <taxon>Murinae</taxon>
        <taxon>Mus</taxon>
        <taxon>Mus</taxon>
    </lineage>
</organism>
<evidence type="ECO:0000250" key="1"/>
<evidence type="ECO:0000250" key="2">
    <source>
        <dbReference type="UniProtKB" id="Q96SB4"/>
    </source>
</evidence>
<evidence type="ECO:0000250" key="3">
    <source>
        <dbReference type="UniProtKB" id="Q9UPE1"/>
    </source>
</evidence>
<evidence type="ECO:0000255" key="4">
    <source>
        <dbReference type="PROSITE-ProRule" id="PRU00159"/>
    </source>
</evidence>
<evidence type="ECO:0000255" key="5">
    <source>
        <dbReference type="PROSITE-ProRule" id="PRU10027"/>
    </source>
</evidence>
<evidence type="ECO:0000256" key="6">
    <source>
        <dbReference type="SAM" id="MobiDB-lite"/>
    </source>
</evidence>
<evidence type="ECO:0000269" key="7">
    <source>
    </source>
</evidence>
<evidence type="ECO:0000269" key="8">
    <source>
    </source>
</evidence>
<evidence type="ECO:0000305" key="9"/>
<evidence type="ECO:0000312" key="10">
    <source>
        <dbReference type="EMBL" id="AAH05707.1"/>
    </source>
</evidence>
<evidence type="ECO:0000312" key="11">
    <source>
        <dbReference type="EMBL" id="AAH50761.1"/>
    </source>
</evidence>
<evidence type="ECO:0000312" key="12">
    <source>
        <dbReference type="EMBL" id="BAA25299.1"/>
    </source>
</evidence>
<evidence type="ECO:0000312" key="13">
    <source>
        <dbReference type="EMBL" id="CAA11833.1"/>
    </source>
</evidence>
<evidence type="ECO:0000312" key="14">
    <source>
        <dbReference type="MGI" id="MGI:106908"/>
    </source>
</evidence>
<evidence type="ECO:0007744" key="15">
    <source>
    </source>
</evidence>
<evidence type="ECO:0007744" key="16">
    <source>
    </source>
</evidence>
<sequence length="648" mass="73088">MERKVLALQARKKRTKAKKDKAQRKPETQHRGSAPHSESDIPEQEEEILGSDDDEQEDPNDYCKGGYHLVKIGDLFNGRYHVIRKLGWGHFSTVWLSWDIQGKKFVAMKVVKSAEHYTETALDEIRLLKSVRNSDPNDPNGEMVVQLLDDFKISGVNGTHICMVFEVLGHHLLKWIIKSNYQGLPLPCVKKIIQQVLQGLDYLHTKCRIIHTDIKPENILLSVNEQYIRRLAAEATEWQRSGAPPPSGSAVSTAPQPKPADKMSKNKKKKLKKKQKRQAELLEKRMQEIEEMEKESGPGQKRPNKQEESESPVDRPLTENPPNKMTQEKLEESNSIGQDQTLTERGGEGGAPEINCNGVIGVVNYPENSNNETLRHKEDLHNANDCDVHTLKQEPSFLNSSNGDSSPSQDTDSCTPTASETMVCQSSAEQSLTRQDITQLEESIRADTPSGDEQEPNGALDSKGKFSAGNFLINPLEPKNAEKLQVKIADLGNACWVHKHFTEDIQTRQYRSLEVLIGSGYNTPADIWSTACMAFELATGDYLFEPHSGEDYTRDEDHIALIIELLGKVPRKLIVAGKYSKEFFTKKGDLKHITKLKPWGLLEVLVEKYEWPQEEAAGFTDFLLPMLELMPEKRATAAECLRHPWLNS</sequence>
<comment type="function">
    <text evidence="1 7 8">Serine/arginine-rich protein-specific kinase which specifically phosphorylates its substrates at serine residues located in regions rich in arginine/serine dipeptides, known as RS domains and is involved in the phosphorylation of SR splicing factors and the regulation of splicing. Plays a central role in the regulatory network for splicing, controlling the intranuclear distribution of splicing factors in interphase cells and the reorganization of nuclear speckles during mitosis. Can influence additional steps of mRNA maturation, as well as other cellular activities, such as chromatin reorganization in somatic and sperm cells and cell cycle progression. Phosphorylates SFRS2, ZRSR2, LBR and PRM1. Phosphorylates SRSF1 using a directional (C-terminal to N-terminal) and a dual-track mechanism incorporating both processive phosphorylation (in which the kinase stays attached to the substrate after each round of phosphorylation) and distributive phosphorylation steps (in which the kinase and substrate dissociate after each phosphorylation event). The RS domain of SRSF1 binds first to a docking groove in the large lobe of the kinase domain of SRPK1. This induces certain structural changes in SRPK1 and/or RRM2 domain of SRSF1, allowing RRM2 to bind the kinase and initiate phosphorylation. The cycles continue for several phosphorylation steps in a processive manner (steps 1-8) until the last few phosphorylation steps (approximately steps 9-12). During that time, a mechanical stress induces the unfolding of the beta-4 motif in RRM2, which then docks at the docking groove of SRPK1. This also signals RRM2 to begin to dissociate, which facilitates SRSF1 dissociation after phosphorylation is completed. Can mediate hepatitis B virus (HBV) core protein phosphorylation. It plays a negative role in the regulation of HBV replication through a mechanism not involving the phosphorylation of the core protein but by reducing the packaging efficiency of the pregenomic RNA (pgRNA) without affecting the formation of the viral core particles. Can induce splicing of exon 10 in MAPT/TAU (By similarity).</text>
</comment>
<comment type="catalytic activity">
    <reaction evidence="7 8">
        <text>L-seryl-[protein] + ATP = O-phospho-L-seryl-[protein] + ADP + H(+)</text>
        <dbReference type="Rhea" id="RHEA:17989"/>
        <dbReference type="Rhea" id="RHEA-COMP:9863"/>
        <dbReference type="Rhea" id="RHEA-COMP:11604"/>
        <dbReference type="ChEBI" id="CHEBI:15378"/>
        <dbReference type="ChEBI" id="CHEBI:29999"/>
        <dbReference type="ChEBI" id="CHEBI:30616"/>
        <dbReference type="ChEBI" id="CHEBI:83421"/>
        <dbReference type="ChEBI" id="CHEBI:456216"/>
        <dbReference type="EC" id="2.7.11.1"/>
    </reaction>
</comment>
<comment type="catalytic activity">
    <reaction evidence="7 8">
        <text>L-threonyl-[protein] + ATP = O-phospho-L-threonyl-[protein] + ADP + H(+)</text>
        <dbReference type="Rhea" id="RHEA:46608"/>
        <dbReference type="Rhea" id="RHEA-COMP:11060"/>
        <dbReference type="Rhea" id="RHEA-COMP:11605"/>
        <dbReference type="ChEBI" id="CHEBI:15378"/>
        <dbReference type="ChEBI" id="CHEBI:30013"/>
        <dbReference type="ChEBI" id="CHEBI:30616"/>
        <dbReference type="ChEBI" id="CHEBI:61977"/>
        <dbReference type="ChEBI" id="CHEBI:456216"/>
        <dbReference type="EC" id="2.7.11.1"/>
    </reaction>
</comment>
<comment type="cofactor">
    <cofactor evidence="7 8">
        <name>Mg(2+)</name>
        <dbReference type="ChEBI" id="CHEBI:18420"/>
    </cofactor>
</comment>
<comment type="activity regulation">
    <text evidence="2">Activated by phosphorylation on Ser-51 and Ser-548.</text>
</comment>
<comment type="subunit">
    <text evidence="1">Monomer. Found in a multisubunit complex containing seven proteins, named toposome, which separates entangled circular chromatin DNA during chromosome segregation. Interacts with HHV-1 ICP27 protein. Interacts with DNAJC8 and AHSA1/AHA1 and this mediates formation of a complex with the Hsp70 /Hsp90 machinery. Binds to IGF2BP1, SYNCRIP, HNRNPA2B1 and HNRNPC. Interacts with SAFB/SAFB1 and SAFB2 which inhibits its activity (By similarity).</text>
</comment>
<comment type="interaction">
    <interactant intactId="EBI-593343">
        <id>O70551</id>
    </interactant>
    <interactant intactId="EBI-398920">
        <id>Q07955</id>
        <label>SRSF1</label>
    </interactant>
    <organismsDiffer>true</organismsDiffer>
    <experiments>5</experiments>
</comment>
<comment type="subcellular location">
    <subcellularLocation>
        <location evidence="2">Cytoplasm</location>
    </subcellularLocation>
    <subcellularLocation>
        <location evidence="2">Nucleus</location>
        <location evidence="2">Nucleoplasm</location>
    </subcellularLocation>
    <subcellularLocation>
        <location evidence="2">Nucleus matrix</location>
    </subcellularLocation>
    <subcellularLocation>
        <location evidence="2">Microsome</location>
    </subcellularLocation>
    <subcellularLocation>
        <location evidence="2">Nucleus speckle</location>
    </subcellularLocation>
    <subcellularLocation>
        <location evidence="2">Chromosome</location>
    </subcellularLocation>
    <text evidence="2">Shuttles between the nucleus and the cytoplasm (By similarity). Inhibition of the Hsp90 ATPase activity, osmotic stress and interaction with HHV-1 ICP27 protein can induce its translocation to the nucleus (By similarity). KAT5/TIP60 inhibits its nuclear translocation (By similarity). Preferentially localizes to the promoter of gene coding regions (By similarity).</text>
</comment>
<comment type="tissue specificity">
    <text evidence="7 8">Predominantly expressed in the testis but is also present at lower levels in heart, spleen, liver, brain, kidney, lung and skeletal muscle. Present in all germinal cells in the seminiferous tubules but not in mature spermatozoa.</text>
</comment>
<comment type="similarity">
    <text evidence="9">Belongs to the protein kinase superfamily. CMGC Ser/Thr protein kinase family.</text>
</comment>
<keyword id="KW-0067">ATP-binding</keyword>
<keyword id="KW-0158">Chromosome</keyword>
<keyword id="KW-0159">Chromosome partition</keyword>
<keyword id="KW-0963">Cytoplasm</keyword>
<keyword id="KW-0221">Differentiation</keyword>
<keyword id="KW-0903">Direct protein sequencing</keyword>
<keyword id="KW-0256">Endoplasmic reticulum</keyword>
<keyword id="KW-0418">Kinase</keyword>
<keyword id="KW-0492">Microsome</keyword>
<keyword id="KW-0507">mRNA processing</keyword>
<keyword id="KW-0508">mRNA splicing</keyword>
<keyword id="KW-0547">Nucleotide-binding</keyword>
<keyword id="KW-0539">Nucleus</keyword>
<keyword id="KW-0597">Phosphoprotein</keyword>
<keyword id="KW-1185">Reference proteome</keyword>
<keyword id="KW-0723">Serine/threonine-protein kinase</keyword>
<keyword id="KW-0808">Transferase</keyword>
<proteinExistence type="evidence at protein level"/>
<reference evidence="9 12" key="1">
    <citation type="journal article" date="1998" name="Biochem. Biophys. Res. Commun.">
        <title>Novel SR-protein-specific kinase, SRPK2, disassembles nuclear speckles.</title>
        <authorList>
            <person name="Kuroyanagi N."/>
            <person name="Onogi H."/>
            <person name="Wakabayashi T."/>
            <person name="Hagiwara M."/>
        </authorList>
    </citation>
    <scope>NUCLEOTIDE SEQUENCE [MRNA]</scope>
    <scope>FUNCTION</scope>
    <scope>TISSUE SPECIFICITY</scope>
    <source>
        <tissue evidence="8">Brain</tissue>
    </source>
</reference>
<reference evidence="9 13" key="2">
    <citation type="journal article" date="1999" name="Nucleic Acids Res.">
        <title>SR protein-specific kinase 1 is highly expressed in testis and phosphorylates protamine 1.</title>
        <authorList>
            <person name="Papoutsopoulou S."/>
            <person name="Nikolakaki E."/>
            <person name="Chalepakis G."/>
            <person name="Kruft V."/>
            <person name="Chevaillier P."/>
            <person name="Giannakouros T."/>
        </authorList>
    </citation>
    <scope>NUCLEOTIDE SEQUENCE [MRNA]</scope>
    <scope>FUNCTION</scope>
    <scope>TISSUE SPECIFICITY</scope>
    <source>
        <tissue evidence="13">Embryo</tissue>
    </source>
</reference>
<reference evidence="9 10" key="3">
    <citation type="journal article" date="2004" name="Genome Res.">
        <title>The status, quality, and expansion of the NIH full-length cDNA project: the Mammalian Gene Collection (MGC).</title>
        <authorList>
            <consortium name="The MGC Project Team"/>
        </authorList>
    </citation>
    <scope>NUCLEOTIDE SEQUENCE [LARGE SCALE MRNA]</scope>
    <source>
        <strain evidence="10">FVB/N</strain>
        <tissue evidence="10">Mammary gland</tissue>
        <tissue evidence="11">Testis</tissue>
    </source>
</reference>
<reference key="4">
    <citation type="submission" date="2009-01" db="UniProtKB">
        <authorList>
            <person name="Lubec G."/>
            <person name="Sunyer B."/>
            <person name="Chen W.-Q."/>
        </authorList>
    </citation>
    <scope>PROTEIN SEQUENCE OF 573-581</scope>
    <scope>IDENTIFICATION BY MASS SPECTROMETRY</scope>
    <source>
        <strain>OF1</strain>
        <tissue>Hippocampus</tissue>
    </source>
</reference>
<reference key="5">
    <citation type="journal article" date="2004" name="Mol. Cell. Proteomics">
        <title>Phosphoproteomic analysis of the developing mouse brain.</title>
        <authorList>
            <person name="Ballif B.A."/>
            <person name="Villen J."/>
            <person name="Beausoleil S.A."/>
            <person name="Schwartz D."/>
            <person name="Gygi S.P."/>
        </authorList>
    </citation>
    <scope>IDENTIFICATION BY MASS SPECTROMETRY [LARGE SCALE ANALYSIS]</scope>
    <source>
        <tissue>Embryonic brain</tissue>
    </source>
</reference>
<reference key="6">
    <citation type="journal article" date="2007" name="Proc. Natl. Acad. Sci. U.S.A.">
        <title>Large-scale phosphorylation analysis of mouse liver.</title>
        <authorList>
            <person name="Villen J."/>
            <person name="Beausoleil S.A."/>
            <person name="Gerber S.A."/>
            <person name="Gygi S.P."/>
        </authorList>
    </citation>
    <scope>PHOSPHORYLATION [LARGE SCALE ANALYSIS] AT SER-51; SER-309; SER-311; THR-448 AND SER-450</scope>
    <scope>IDENTIFICATION BY MASS SPECTROMETRY [LARGE SCALE ANALYSIS]</scope>
    <source>
        <tissue>Liver</tissue>
    </source>
</reference>
<reference key="7">
    <citation type="journal article" date="2010" name="Cell">
        <title>A tissue-specific atlas of mouse protein phosphorylation and expression.</title>
        <authorList>
            <person name="Huttlin E.L."/>
            <person name="Jedrychowski M.P."/>
            <person name="Elias J.E."/>
            <person name="Goswami T."/>
            <person name="Rad R."/>
            <person name="Beausoleil S.A."/>
            <person name="Villen J."/>
            <person name="Haas W."/>
            <person name="Sowa M.E."/>
            <person name="Gygi S.P."/>
        </authorList>
    </citation>
    <scope>PHOSPHORYLATION [LARGE SCALE ANALYSIS] AT SER-51; SER-311; THR-448 AND SER-450</scope>
    <scope>IDENTIFICATION BY MASS SPECTROMETRY [LARGE SCALE ANALYSIS]</scope>
    <source>
        <tissue>Brain</tissue>
        <tissue>Brown adipose tissue</tissue>
        <tissue>Kidney</tissue>
        <tissue>Liver</tissue>
        <tissue>Lung</tissue>
        <tissue>Pancreas</tissue>
        <tissue>Spleen</tissue>
        <tissue>Testis</tissue>
    </source>
</reference>
<protein>
    <recommendedName>
        <fullName>SRSF protein kinase 1</fullName>
        <ecNumber>2.7.11.1</ecNumber>
    </recommendedName>
    <alternativeName>
        <fullName>SFRS protein kinase 1</fullName>
    </alternativeName>
    <alternativeName>
        <fullName>Serine/arginine-rich protein-specific kinase 1</fullName>
        <shortName>SR-protein-specific kinase 1</shortName>
    </alternativeName>
</protein>
<dbReference type="EC" id="2.7.11.1"/>
<dbReference type="EMBL" id="AB012290">
    <property type="protein sequence ID" value="BAA25299.1"/>
    <property type="molecule type" value="mRNA"/>
</dbReference>
<dbReference type="EMBL" id="AJ224115">
    <property type="protein sequence ID" value="CAA11833.1"/>
    <property type="molecule type" value="mRNA"/>
</dbReference>
<dbReference type="EMBL" id="BC005707">
    <property type="protein sequence ID" value="AAH05707.1"/>
    <property type="molecule type" value="mRNA"/>
</dbReference>
<dbReference type="EMBL" id="BC050761">
    <property type="protein sequence ID" value="AAH50761.1"/>
    <property type="molecule type" value="mRNA"/>
</dbReference>
<dbReference type="CCDS" id="CCDS37531.1"/>
<dbReference type="PIR" id="JC5930">
    <property type="entry name" value="JC5930"/>
</dbReference>
<dbReference type="RefSeq" id="NP_058075.2">
    <property type="nucleotide sequence ID" value="NM_016795.4"/>
</dbReference>
<dbReference type="SMR" id="O70551"/>
<dbReference type="BioGRID" id="203502">
    <property type="interactions" value="1"/>
</dbReference>
<dbReference type="FunCoup" id="O70551">
    <property type="interactions" value="3859"/>
</dbReference>
<dbReference type="IntAct" id="O70551">
    <property type="interactions" value="2"/>
</dbReference>
<dbReference type="STRING" id="10090.ENSMUSP00000116259"/>
<dbReference type="BindingDB" id="O70551"/>
<dbReference type="ChEMBL" id="CHEMBL4105750"/>
<dbReference type="GlyGen" id="O70551">
    <property type="glycosylation" value="2 sites, 1 N-linked glycan (1 site), 1 O-linked glycan (1 site)"/>
</dbReference>
<dbReference type="iPTMnet" id="O70551"/>
<dbReference type="PhosphoSitePlus" id="O70551"/>
<dbReference type="jPOST" id="O70551"/>
<dbReference type="PaxDb" id="10090-ENSMUSP00000116259"/>
<dbReference type="PeptideAtlas" id="O70551"/>
<dbReference type="ProteomicsDB" id="263346"/>
<dbReference type="Pumba" id="O70551"/>
<dbReference type="Antibodypedia" id="6714">
    <property type="antibodies" value="483 antibodies from 32 providers"/>
</dbReference>
<dbReference type="DNASU" id="20815"/>
<dbReference type="Ensembl" id="ENSMUST00000130643.9">
    <property type="protein sequence ID" value="ENSMUSP00000116259.2"/>
    <property type="gene ID" value="ENSMUSG00000004865.17"/>
</dbReference>
<dbReference type="GeneID" id="20815"/>
<dbReference type="KEGG" id="mmu:20815"/>
<dbReference type="UCSC" id="uc008bri.1">
    <property type="organism name" value="mouse"/>
</dbReference>
<dbReference type="AGR" id="MGI:106908"/>
<dbReference type="CTD" id="6732"/>
<dbReference type="MGI" id="MGI:106908">
    <property type="gene designation" value="Srpk1"/>
</dbReference>
<dbReference type="VEuPathDB" id="HostDB:ENSMUSG00000004865"/>
<dbReference type="eggNOG" id="KOG1290">
    <property type="taxonomic scope" value="Eukaryota"/>
</dbReference>
<dbReference type="GeneTree" id="ENSGT00940000155264"/>
<dbReference type="HOGENOM" id="CLU_000288_81_9_1"/>
<dbReference type="InParanoid" id="O70551"/>
<dbReference type="OMA" id="HEGQRPP"/>
<dbReference type="OrthoDB" id="2649at2759"/>
<dbReference type="PhylomeDB" id="O70551"/>
<dbReference type="TreeFam" id="TF105334"/>
<dbReference type="BioGRID-ORCS" id="20815">
    <property type="hits" value="11 hits in 81 CRISPR screens"/>
</dbReference>
<dbReference type="ChiTaRS" id="Srpk1">
    <property type="organism name" value="mouse"/>
</dbReference>
<dbReference type="PRO" id="PR:O70551"/>
<dbReference type="Proteomes" id="UP000000589">
    <property type="component" value="Chromosome 17"/>
</dbReference>
<dbReference type="RNAct" id="O70551">
    <property type="molecule type" value="protein"/>
</dbReference>
<dbReference type="Bgee" id="ENSMUSG00000004865">
    <property type="expression patterns" value="Expressed in embryonic post-anal tail and 268 other cell types or tissues"/>
</dbReference>
<dbReference type="ExpressionAtlas" id="O70551">
    <property type="expression patterns" value="baseline and differential"/>
</dbReference>
<dbReference type="GO" id="GO:0000785">
    <property type="term" value="C:chromatin"/>
    <property type="evidence" value="ECO:0000250"/>
    <property type="project" value="UniProtKB"/>
</dbReference>
<dbReference type="GO" id="GO:0005737">
    <property type="term" value="C:cytoplasm"/>
    <property type="evidence" value="ECO:0000250"/>
    <property type="project" value="UniProtKB"/>
</dbReference>
<dbReference type="GO" id="GO:0005829">
    <property type="term" value="C:cytosol"/>
    <property type="evidence" value="ECO:0007669"/>
    <property type="project" value="Ensembl"/>
</dbReference>
<dbReference type="GO" id="GO:0005783">
    <property type="term" value="C:endoplasmic reticulum"/>
    <property type="evidence" value="ECO:0007669"/>
    <property type="project" value="UniProtKB-KW"/>
</dbReference>
<dbReference type="GO" id="GO:0016363">
    <property type="term" value="C:nuclear matrix"/>
    <property type="evidence" value="ECO:0007669"/>
    <property type="project" value="UniProtKB-SubCell"/>
</dbReference>
<dbReference type="GO" id="GO:0016607">
    <property type="term" value="C:nuclear speck"/>
    <property type="evidence" value="ECO:0000250"/>
    <property type="project" value="UniProtKB"/>
</dbReference>
<dbReference type="GO" id="GO:0005654">
    <property type="term" value="C:nucleoplasm"/>
    <property type="evidence" value="ECO:0000250"/>
    <property type="project" value="UniProtKB"/>
</dbReference>
<dbReference type="GO" id="GO:0005634">
    <property type="term" value="C:nucleus"/>
    <property type="evidence" value="ECO:0000250"/>
    <property type="project" value="UniProtKB"/>
</dbReference>
<dbReference type="GO" id="GO:0005886">
    <property type="term" value="C:plasma membrane"/>
    <property type="evidence" value="ECO:0007669"/>
    <property type="project" value="Ensembl"/>
</dbReference>
<dbReference type="GO" id="GO:0005524">
    <property type="term" value="F:ATP binding"/>
    <property type="evidence" value="ECO:0000314"/>
    <property type="project" value="UniProtKB"/>
</dbReference>
<dbReference type="GO" id="GO:0000287">
    <property type="term" value="F:magnesium ion binding"/>
    <property type="evidence" value="ECO:0000314"/>
    <property type="project" value="UniProtKB"/>
</dbReference>
<dbReference type="GO" id="GO:0106310">
    <property type="term" value="F:protein serine kinase activity"/>
    <property type="evidence" value="ECO:0000304"/>
    <property type="project" value="Reactome"/>
</dbReference>
<dbReference type="GO" id="GO:0004674">
    <property type="term" value="F:protein serine/threonine kinase activity"/>
    <property type="evidence" value="ECO:0000314"/>
    <property type="project" value="UniProtKB"/>
</dbReference>
<dbReference type="GO" id="GO:0030154">
    <property type="term" value="P:cell differentiation"/>
    <property type="evidence" value="ECO:0007669"/>
    <property type="project" value="UniProtKB-KW"/>
</dbReference>
<dbReference type="GO" id="GO:0007059">
    <property type="term" value="P:chromosome segregation"/>
    <property type="evidence" value="ECO:0000250"/>
    <property type="project" value="UniProtKB"/>
</dbReference>
<dbReference type="GO" id="GO:0035556">
    <property type="term" value="P:intracellular signal transduction"/>
    <property type="evidence" value="ECO:0000314"/>
    <property type="project" value="UniProtKB"/>
</dbReference>
<dbReference type="GO" id="GO:0006397">
    <property type="term" value="P:mRNA processing"/>
    <property type="evidence" value="ECO:0007669"/>
    <property type="project" value="UniProtKB-KW"/>
</dbReference>
<dbReference type="GO" id="GO:0045071">
    <property type="term" value="P:negative regulation of viral genome replication"/>
    <property type="evidence" value="ECO:0007669"/>
    <property type="project" value="Ensembl"/>
</dbReference>
<dbReference type="GO" id="GO:0045070">
    <property type="term" value="P:positive regulation of viral genome replication"/>
    <property type="evidence" value="ECO:0007669"/>
    <property type="project" value="Ensembl"/>
</dbReference>
<dbReference type="GO" id="GO:0006468">
    <property type="term" value="P:protein phosphorylation"/>
    <property type="evidence" value="ECO:0000314"/>
    <property type="project" value="UniProtKB"/>
</dbReference>
<dbReference type="GO" id="GO:0050684">
    <property type="term" value="P:regulation of mRNA processing"/>
    <property type="evidence" value="ECO:0000314"/>
    <property type="project" value="UniProtKB"/>
</dbReference>
<dbReference type="GO" id="GO:0008380">
    <property type="term" value="P:RNA splicing"/>
    <property type="evidence" value="ECO:0007669"/>
    <property type="project" value="UniProtKB-KW"/>
</dbReference>
<dbReference type="FunFam" id="1.10.510.10:FF:000761">
    <property type="entry name" value="SRSF protein kinase 1"/>
    <property type="match status" value="1"/>
</dbReference>
<dbReference type="FunFam" id="1.10.510.10:FF:000105">
    <property type="entry name" value="SRSF protein kinase 2"/>
    <property type="match status" value="1"/>
</dbReference>
<dbReference type="FunFam" id="3.30.200.20:FF:000163">
    <property type="entry name" value="SRSF protein kinase 2 isoform X1"/>
    <property type="match status" value="1"/>
</dbReference>
<dbReference type="Gene3D" id="3.30.200.20">
    <property type="entry name" value="Phosphorylase Kinase, domain 1"/>
    <property type="match status" value="1"/>
</dbReference>
<dbReference type="Gene3D" id="1.10.510.10">
    <property type="entry name" value="Transferase(Phosphotransferase) domain 1"/>
    <property type="match status" value="2"/>
</dbReference>
<dbReference type="InterPro" id="IPR011009">
    <property type="entry name" value="Kinase-like_dom_sf"/>
</dbReference>
<dbReference type="InterPro" id="IPR000719">
    <property type="entry name" value="Prot_kinase_dom"/>
</dbReference>
<dbReference type="InterPro" id="IPR017441">
    <property type="entry name" value="Protein_kinase_ATP_BS"/>
</dbReference>
<dbReference type="InterPro" id="IPR008271">
    <property type="entry name" value="Ser/Thr_kinase_AS"/>
</dbReference>
<dbReference type="InterPro" id="IPR051334">
    <property type="entry name" value="SRPK"/>
</dbReference>
<dbReference type="PANTHER" id="PTHR47634">
    <property type="entry name" value="PROTEIN KINASE DOMAIN-CONTAINING PROTEIN-RELATED"/>
    <property type="match status" value="1"/>
</dbReference>
<dbReference type="PANTHER" id="PTHR47634:SF4">
    <property type="entry name" value="SRSF PROTEIN KINASE 1"/>
    <property type="match status" value="1"/>
</dbReference>
<dbReference type="Pfam" id="PF00069">
    <property type="entry name" value="Pkinase"/>
    <property type="match status" value="2"/>
</dbReference>
<dbReference type="SMART" id="SM00220">
    <property type="entry name" value="S_TKc"/>
    <property type="match status" value="1"/>
</dbReference>
<dbReference type="SUPFAM" id="SSF56112">
    <property type="entry name" value="Protein kinase-like (PK-like)"/>
    <property type="match status" value="1"/>
</dbReference>
<dbReference type="PROSITE" id="PS00107">
    <property type="entry name" value="PROTEIN_KINASE_ATP"/>
    <property type="match status" value="1"/>
</dbReference>
<dbReference type="PROSITE" id="PS50011">
    <property type="entry name" value="PROTEIN_KINASE_DOM"/>
    <property type="match status" value="1"/>
</dbReference>
<dbReference type="PROSITE" id="PS00108">
    <property type="entry name" value="PROTEIN_KINASE_ST"/>
    <property type="match status" value="1"/>
</dbReference>
<accession>O70551</accession>
<accession>O70193</accession>
<accession>Q99JT3</accession>